<gene>
    <name evidence="2" type="primary">graA</name>
</gene>
<keyword id="KW-0274">FAD</keyword>
<keyword id="KW-0285">Flavoprotein</keyword>
<keyword id="KW-0503">Monooxygenase</keyword>
<keyword id="KW-0560">Oxidoreductase</keyword>
<evidence type="ECO:0000269" key="1">
    <source>
    </source>
</evidence>
<evidence type="ECO:0000303" key="2">
    <source>
    </source>
</evidence>
<evidence type="ECO:0000305" key="3"/>
<protein>
    <recommendedName>
        <fullName evidence="3">FADH(2)-dependent resorcinol hydroxylase, oxygenase component</fullName>
        <ecNumber evidence="1">1.14.14.27</ecNumber>
    </recommendedName>
</protein>
<dbReference type="EC" id="1.14.14.27" evidence="1"/>
<dbReference type="EMBL" id="AB266210">
    <property type="protein sequence ID" value="BAF44522.1"/>
    <property type="molecule type" value="Genomic_DNA"/>
</dbReference>
<dbReference type="SMR" id="A1IIX2"/>
<dbReference type="KEGG" id="ag:BAF44522"/>
<dbReference type="BioCyc" id="MetaCyc:MONOMER-19792"/>
<dbReference type="BRENDA" id="1.14.14.27">
    <property type="organism ID" value="14628"/>
</dbReference>
<dbReference type="GO" id="GO:0003995">
    <property type="term" value="F:acyl-CoA dehydrogenase activity"/>
    <property type="evidence" value="ECO:0007669"/>
    <property type="project" value="TreeGrafter"/>
</dbReference>
<dbReference type="GO" id="GO:0050660">
    <property type="term" value="F:flavin adenine dinucleotide binding"/>
    <property type="evidence" value="ECO:0007669"/>
    <property type="project" value="InterPro"/>
</dbReference>
<dbReference type="GO" id="GO:0004497">
    <property type="term" value="F:monooxygenase activity"/>
    <property type="evidence" value="ECO:0007669"/>
    <property type="project" value="UniProtKB-KW"/>
</dbReference>
<dbReference type="CDD" id="cd01159">
    <property type="entry name" value="NcnH"/>
    <property type="match status" value="1"/>
</dbReference>
<dbReference type="Gene3D" id="1.10.540.10">
    <property type="entry name" value="Acyl-CoA dehydrogenase/oxidase, N-terminal domain"/>
    <property type="match status" value="1"/>
</dbReference>
<dbReference type="Gene3D" id="2.40.110.10">
    <property type="entry name" value="Butyryl-CoA Dehydrogenase, subunit A, domain 2"/>
    <property type="match status" value="1"/>
</dbReference>
<dbReference type="Gene3D" id="1.20.140.10">
    <property type="entry name" value="Butyryl-CoA Dehydrogenase, subunit A, domain 3"/>
    <property type="match status" value="1"/>
</dbReference>
<dbReference type="InterPro" id="IPR013107">
    <property type="entry name" value="Acyl-CoA_DH_C"/>
</dbReference>
<dbReference type="InterPro" id="IPR046373">
    <property type="entry name" value="Acyl-CoA_Oxase/DH_mid-dom_sf"/>
</dbReference>
<dbReference type="InterPro" id="IPR036250">
    <property type="entry name" value="AcylCo_DH-like_C"/>
</dbReference>
<dbReference type="InterPro" id="IPR013786">
    <property type="entry name" value="AcylCoA_DH/ox_N"/>
</dbReference>
<dbReference type="InterPro" id="IPR037069">
    <property type="entry name" value="AcylCoA_DH/ox_N_sf"/>
</dbReference>
<dbReference type="InterPro" id="IPR009100">
    <property type="entry name" value="AcylCoA_DH/oxidase_NM_dom_sf"/>
</dbReference>
<dbReference type="PANTHER" id="PTHR43884">
    <property type="entry name" value="ACYL-COA DEHYDROGENASE"/>
    <property type="match status" value="1"/>
</dbReference>
<dbReference type="PANTHER" id="PTHR43884:SF12">
    <property type="entry name" value="ISOVALERYL-COA DEHYDROGENASE, MITOCHONDRIAL-RELATED"/>
    <property type="match status" value="1"/>
</dbReference>
<dbReference type="Pfam" id="PF08028">
    <property type="entry name" value="Acyl-CoA_dh_2"/>
    <property type="match status" value="1"/>
</dbReference>
<dbReference type="Pfam" id="PF02771">
    <property type="entry name" value="Acyl-CoA_dh_N"/>
    <property type="match status" value="1"/>
</dbReference>
<dbReference type="PIRSF" id="PIRSF016578">
    <property type="entry name" value="HsaA"/>
    <property type="match status" value="1"/>
</dbReference>
<dbReference type="SUPFAM" id="SSF47203">
    <property type="entry name" value="Acyl-CoA dehydrogenase C-terminal domain-like"/>
    <property type="match status" value="1"/>
</dbReference>
<dbReference type="SUPFAM" id="SSF56645">
    <property type="entry name" value="Acyl-CoA dehydrogenase NM domain-like"/>
    <property type="match status" value="1"/>
</dbReference>
<comment type="function">
    <text evidence="1">Involved in the gamma-resorcylate (2,6-dihydroxybenzoate) catabolism (PubMed:17158677). Oxygenase component of the resorcinol hydroxylase, which catalyzes the FADH(2)-dependent conversion of resorcinol to hydroxyquinol (PubMed:17158677).</text>
</comment>
<comment type="catalytic activity">
    <reaction evidence="1">
        <text>resorcinol + FADH2 + O2 = benzene-1,2,4-triol + FAD + H2O + H(+)</text>
        <dbReference type="Rhea" id="RHEA:50228"/>
        <dbReference type="ChEBI" id="CHEBI:15377"/>
        <dbReference type="ChEBI" id="CHEBI:15378"/>
        <dbReference type="ChEBI" id="CHEBI:15379"/>
        <dbReference type="ChEBI" id="CHEBI:16971"/>
        <dbReference type="ChEBI" id="CHEBI:27810"/>
        <dbReference type="ChEBI" id="CHEBI:57692"/>
        <dbReference type="ChEBI" id="CHEBI:58307"/>
        <dbReference type="EC" id="1.14.14.27"/>
    </reaction>
    <physiologicalReaction direction="left-to-right" evidence="1">
        <dbReference type="Rhea" id="RHEA:50229"/>
    </physiologicalReaction>
</comment>
<comment type="pathway">
    <text evidence="3">Aromatic compound metabolism.</text>
</comment>
<comment type="subunit">
    <text evidence="1">The FADH(2)-dependent resorcinol hydroxylase is composed of two subunits, GraA (the oxygenase component) and GraD (the reductase component). Both subunits are required for activity.</text>
</comment>
<comment type="induction">
    <text evidence="1">Induced in the presence of gamma-resorcylate.</text>
</comment>
<comment type="similarity">
    <text evidence="3">Belongs to the HpaH/HsaA monooxygenase family.</text>
</comment>
<proteinExistence type="evidence at protein level"/>
<organism>
    <name type="scientific">Rhizobium sp. (strain MTP-10005)</name>
    <dbReference type="NCBI Taxonomy" id="267998"/>
    <lineage>
        <taxon>Bacteria</taxon>
        <taxon>Pseudomonadati</taxon>
        <taxon>Pseudomonadota</taxon>
        <taxon>Alphaproteobacteria</taxon>
        <taxon>Hyphomicrobiales</taxon>
        <taxon>Rhizobiaceae</taxon>
        <taxon>Rhizobium/Agrobacterium group</taxon>
        <taxon>Rhizobium</taxon>
    </lineage>
</organism>
<accession>A1IIX2</accession>
<name>GRAA_RHIS5</name>
<sequence length="409" mass="43305">MNDMSHAPQPAQTKPHVRLVGRVAGVADLFRSSARQTEEARRVPASHIAALRGIGYFDIVKPRAFGGQGGEFAELVEANIELSAACASTGWVAGLLSAHQWLLAMFPEEAQADVWDENPDALLCGSYAPVKMAEAADGGYRLSGKWAFASGCENAQWSLCAAILPPQAKGRPVPAFLLVPASQYAIEDTWHVVGLAGTVSKTLVLDDVFVPKHRVLTFPDATSGHTPGGRFYAQEGLFNMPLLTGIPSCLASTGVGAAKGALAAYVDHVGGRVTRGAVAGGNNRMAEFPTIQLRVAEAAASVDAACEILLRDVARAQALSQARLEGRAEFSVDDRLLSRRGQSFSVSFSLRAVQALNDSTGGVGLDLSNPVQRAWRDANAVGRHISMNWDAVGTMIGQSMLGLEPKGQY</sequence>
<feature type="chain" id="PRO_0000454489" description="FADH(2)-dependent resorcinol hydroxylase, oxygenase component">
    <location>
        <begin position="1"/>
        <end position="409"/>
    </location>
</feature>
<reference key="1">
    <citation type="journal article" date="2007" name="J. Bacteriol.">
        <title>Biochemical and genetic analysis of the gamma-resorcylate (2,6-dihydroxybenzoate) catabolic pathway in Rhizobium sp. strain MTP-10005: identification and functional analysis of its gene cluster.</title>
        <authorList>
            <person name="Yoshida M."/>
            <person name="Oikawa T."/>
            <person name="Obata H."/>
            <person name="Abe K."/>
            <person name="Mihara H."/>
            <person name="Esaki N."/>
        </authorList>
    </citation>
    <scope>NUCLEOTIDE SEQUENCE [GENOMIC DNA]</scope>
    <scope>FUNCTION</scope>
    <scope>CATALYTIC ACTIVITY</scope>
    <scope>SUBUNIT</scope>
    <scope>INDUCTION</scope>
    <source>
        <strain>MTP-10005</strain>
    </source>
</reference>